<sequence length="434" mass="48088">MFLDTAKIKVKAGNGGDGMVAFRREKYVPNGGPWGGDGGRGGNVVFVVDEGLRTLMDFRYNRHFKADSGEKGMTKGMHGRGAEDLRVRVPQGTTVRDAETGKVLTDLIEHGQEFIVAHGGRGGRGNIRFATPKNPAPEISENGEPGQERELQLELKILADVGLVGFPSVGKSTLLSVITSAKPKIGAYHFTTIVPNLGMVRTQSGESFAVADLPGLIEGASQGVGLGTQFLRHIERTRVILHIIDMSASEGRDPYEDYLAINKELESYNLRLMERPQIIVANKMDMPESQENLEDFKKKLAENYDEFEELPAIFPISGLTKQGLATLLDATAELLDKTPEFLLYDESDMEEEAYYGFDEEEKAFEISRDDDATWVLSGEKLMKLFNMTNFDRDESVMKFARQLRGMGGDEALRARGAKDGDLVRIGKFEFEFVD</sequence>
<proteinExistence type="inferred from homology"/>
<feature type="chain" id="PRO_0000386301" description="GTPase Obg">
    <location>
        <begin position="1"/>
        <end position="434"/>
    </location>
</feature>
<feature type="domain" description="Obg" evidence="3">
    <location>
        <begin position="1"/>
        <end position="158"/>
    </location>
</feature>
<feature type="domain" description="OBG-type G" evidence="1">
    <location>
        <begin position="159"/>
        <end position="336"/>
    </location>
</feature>
<feature type="domain" description="OCT" evidence="2">
    <location>
        <begin position="356"/>
        <end position="434"/>
    </location>
</feature>
<feature type="binding site" evidence="1">
    <location>
        <begin position="165"/>
        <end position="172"/>
    </location>
    <ligand>
        <name>GTP</name>
        <dbReference type="ChEBI" id="CHEBI:37565"/>
    </ligand>
</feature>
<feature type="binding site" evidence="1">
    <location>
        <position position="172"/>
    </location>
    <ligand>
        <name>Mg(2+)</name>
        <dbReference type="ChEBI" id="CHEBI:18420"/>
    </ligand>
</feature>
<feature type="binding site" evidence="1">
    <location>
        <begin position="190"/>
        <end position="194"/>
    </location>
    <ligand>
        <name>GTP</name>
        <dbReference type="ChEBI" id="CHEBI:37565"/>
    </ligand>
</feature>
<feature type="binding site" evidence="1">
    <location>
        <position position="192"/>
    </location>
    <ligand>
        <name>Mg(2+)</name>
        <dbReference type="ChEBI" id="CHEBI:18420"/>
    </ligand>
</feature>
<feature type="binding site" evidence="1">
    <location>
        <begin position="212"/>
        <end position="215"/>
    </location>
    <ligand>
        <name>GTP</name>
        <dbReference type="ChEBI" id="CHEBI:37565"/>
    </ligand>
</feature>
<feature type="binding site" evidence="1">
    <location>
        <begin position="282"/>
        <end position="285"/>
    </location>
    <ligand>
        <name>GTP</name>
        <dbReference type="ChEBI" id="CHEBI:37565"/>
    </ligand>
</feature>
<feature type="binding site" evidence="1">
    <location>
        <begin position="317"/>
        <end position="319"/>
    </location>
    <ligand>
        <name>GTP</name>
        <dbReference type="ChEBI" id="CHEBI:37565"/>
    </ligand>
</feature>
<keyword id="KW-0963">Cytoplasm</keyword>
<keyword id="KW-0342">GTP-binding</keyword>
<keyword id="KW-0378">Hydrolase</keyword>
<keyword id="KW-0460">Magnesium</keyword>
<keyword id="KW-0479">Metal-binding</keyword>
<keyword id="KW-0547">Nucleotide-binding</keyword>
<evidence type="ECO:0000255" key="1">
    <source>
        <dbReference type="HAMAP-Rule" id="MF_01454"/>
    </source>
</evidence>
<evidence type="ECO:0000255" key="2">
    <source>
        <dbReference type="PROSITE-ProRule" id="PRU01229"/>
    </source>
</evidence>
<evidence type="ECO:0000255" key="3">
    <source>
        <dbReference type="PROSITE-ProRule" id="PRU01231"/>
    </source>
</evidence>
<dbReference type="EC" id="3.6.5.-" evidence="1"/>
<dbReference type="EMBL" id="CP000936">
    <property type="protein sequence ID" value="ACA37029.1"/>
    <property type="molecule type" value="Genomic_DNA"/>
</dbReference>
<dbReference type="SMR" id="B1IBL9"/>
<dbReference type="KEGG" id="spv:SPH_1167"/>
<dbReference type="HOGENOM" id="CLU_011747_2_1_9"/>
<dbReference type="Proteomes" id="UP000002163">
    <property type="component" value="Chromosome"/>
</dbReference>
<dbReference type="GO" id="GO:0005737">
    <property type="term" value="C:cytoplasm"/>
    <property type="evidence" value="ECO:0007669"/>
    <property type="project" value="UniProtKB-SubCell"/>
</dbReference>
<dbReference type="GO" id="GO:0005525">
    <property type="term" value="F:GTP binding"/>
    <property type="evidence" value="ECO:0007669"/>
    <property type="project" value="UniProtKB-UniRule"/>
</dbReference>
<dbReference type="GO" id="GO:0003924">
    <property type="term" value="F:GTPase activity"/>
    <property type="evidence" value="ECO:0007669"/>
    <property type="project" value="UniProtKB-UniRule"/>
</dbReference>
<dbReference type="GO" id="GO:0000287">
    <property type="term" value="F:magnesium ion binding"/>
    <property type="evidence" value="ECO:0007669"/>
    <property type="project" value="InterPro"/>
</dbReference>
<dbReference type="GO" id="GO:0042254">
    <property type="term" value="P:ribosome biogenesis"/>
    <property type="evidence" value="ECO:0007669"/>
    <property type="project" value="UniProtKB-UniRule"/>
</dbReference>
<dbReference type="CDD" id="cd01898">
    <property type="entry name" value="Obg"/>
    <property type="match status" value="1"/>
</dbReference>
<dbReference type="FunFam" id="2.70.210.12:FF:000001">
    <property type="entry name" value="GTPase Obg"/>
    <property type="match status" value="1"/>
</dbReference>
<dbReference type="FunFam" id="3.40.50.300:FF:000515">
    <property type="entry name" value="GTPase Obg"/>
    <property type="match status" value="1"/>
</dbReference>
<dbReference type="Gene3D" id="3.30.300.350">
    <property type="entry name" value="GTP-binding protein OBG, C-terminal domain"/>
    <property type="match status" value="1"/>
</dbReference>
<dbReference type="Gene3D" id="2.70.210.12">
    <property type="entry name" value="GTP1/OBG domain"/>
    <property type="match status" value="1"/>
</dbReference>
<dbReference type="Gene3D" id="3.40.50.300">
    <property type="entry name" value="P-loop containing nucleotide triphosphate hydrolases"/>
    <property type="match status" value="1"/>
</dbReference>
<dbReference type="HAMAP" id="MF_01454">
    <property type="entry name" value="GTPase_Obg"/>
    <property type="match status" value="1"/>
</dbReference>
<dbReference type="InterPro" id="IPR031167">
    <property type="entry name" value="G_OBG"/>
</dbReference>
<dbReference type="InterPro" id="IPR006073">
    <property type="entry name" value="GTP-bd"/>
</dbReference>
<dbReference type="InterPro" id="IPR014100">
    <property type="entry name" value="GTP-bd_Obg/CgtA"/>
</dbReference>
<dbReference type="InterPro" id="IPR036346">
    <property type="entry name" value="GTP-bd_prot_GTP1/OBG_C_sf"/>
</dbReference>
<dbReference type="InterPro" id="IPR006074">
    <property type="entry name" value="GTP1-OBG_CS"/>
</dbReference>
<dbReference type="InterPro" id="IPR006169">
    <property type="entry name" value="GTP1_OBG_dom"/>
</dbReference>
<dbReference type="InterPro" id="IPR036726">
    <property type="entry name" value="GTP1_OBG_dom_sf"/>
</dbReference>
<dbReference type="InterPro" id="IPR045086">
    <property type="entry name" value="OBG_GTPase"/>
</dbReference>
<dbReference type="InterPro" id="IPR015349">
    <property type="entry name" value="OCT_dom"/>
</dbReference>
<dbReference type="InterPro" id="IPR027417">
    <property type="entry name" value="P-loop_NTPase"/>
</dbReference>
<dbReference type="InterPro" id="IPR005225">
    <property type="entry name" value="Small_GTP-bd"/>
</dbReference>
<dbReference type="NCBIfam" id="TIGR02729">
    <property type="entry name" value="Obg_CgtA"/>
    <property type="match status" value="1"/>
</dbReference>
<dbReference type="NCBIfam" id="TIGR03595">
    <property type="entry name" value="Obg_CgtA_exten"/>
    <property type="match status" value="1"/>
</dbReference>
<dbReference type="NCBIfam" id="NF008954">
    <property type="entry name" value="PRK12296.1"/>
    <property type="match status" value="1"/>
</dbReference>
<dbReference type="NCBIfam" id="NF008955">
    <property type="entry name" value="PRK12297.1"/>
    <property type="match status" value="1"/>
</dbReference>
<dbReference type="NCBIfam" id="NF008956">
    <property type="entry name" value="PRK12299.1"/>
    <property type="match status" value="1"/>
</dbReference>
<dbReference type="NCBIfam" id="TIGR00231">
    <property type="entry name" value="small_GTP"/>
    <property type="match status" value="1"/>
</dbReference>
<dbReference type="PANTHER" id="PTHR11702">
    <property type="entry name" value="DEVELOPMENTALLY REGULATED GTP-BINDING PROTEIN-RELATED"/>
    <property type="match status" value="1"/>
</dbReference>
<dbReference type="PANTHER" id="PTHR11702:SF31">
    <property type="entry name" value="MITOCHONDRIAL RIBOSOME-ASSOCIATED GTPASE 2"/>
    <property type="match status" value="1"/>
</dbReference>
<dbReference type="Pfam" id="PF09269">
    <property type="entry name" value="DUF1967"/>
    <property type="match status" value="1"/>
</dbReference>
<dbReference type="Pfam" id="PF01018">
    <property type="entry name" value="GTP1_OBG"/>
    <property type="match status" value="1"/>
</dbReference>
<dbReference type="Pfam" id="PF01926">
    <property type="entry name" value="MMR_HSR1"/>
    <property type="match status" value="1"/>
</dbReference>
<dbReference type="PIRSF" id="PIRSF002401">
    <property type="entry name" value="GTP_bd_Obg/CgtA"/>
    <property type="match status" value="1"/>
</dbReference>
<dbReference type="PRINTS" id="PR00326">
    <property type="entry name" value="GTP1OBG"/>
</dbReference>
<dbReference type="SUPFAM" id="SSF102741">
    <property type="entry name" value="Obg GTP-binding protein C-terminal domain"/>
    <property type="match status" value="1"/>
</dbReference>
<dbReference type="SUPFAM" id="SSF82051">
    <property type="entry name" value="Obg GTP-binding protein N-terminal domain"/>
    <property type="match status" value="1"/>
</dbReference>
<dbReference type="SUPFAM" id="SSF52540">
    <property type="entry name" value="P-loop containing nucleoside triphosphate hydrolases"/>
    <property type="match status" value="1"/>
</dbReference>
<dbReference type="PROSITE" id="PS51710">
    <property type="entry name" value="G_OBG"/>
    <property type="match status" value="1"/>
</dbReference>
<dbReference type="PROSITE" id="PS00905">
    <property type="entry name" value="GTP1_OBG"/>
    <property type="match status" value="1"/>
</dbReference>
<dbReference type="PROSITE" id="PS51883">
    <property type="entry name" value="OBG"/>
    <property type="match status" value="1"/>
</dbReference>
<dbReference type="PROSITE" id="PS51881">
    <property type="entry name" value="OCT"/>
    <property type="match status" value="1"/>
</dbReference>
<protein>
    <recommendedName>
        <fullName evidence="1">GTPase Obg</fullName>
        <ecNumber evidence="1">3.6.5.-</ecNumber>
    </recommendedName>
    <alternativeName>
        <fullName evidence="1">GTP-binding protein Obg</fullName>
    </alternativeName>
</protein>
<accession>B1IBL9</accession>
<organism>
    <name type="scientific">Streptococcus pneumoniae (strain Hungary19A-6)</name>
    <dbReference type="NCBI Taxonomy" id="487214"/>
    <lineage>
        <taxon>Bacteria</taxon>
        <taxon>Bacillati</taxon>
        <taxon>Bacillota</taxon>
        <taxon>Bacilli</taxon>
        <taxon>Lactobacillales</taxon>
        <taxon>Streptococcaceae</taxon>
        <taxon>Streptococcus</taxon>
    </lineage>
</organism>
<name>OBG_STRPI</name>
<gene>
    <name evidence="1" type="primary">obg</name>
    <name type="ordered locus">SPH_1167</name>
</gene>
<comment type="function">
    <text evidence="1">An essential GTPase which binds GTP, GDP and possibly (p)ppGpp with moderate affinity, with high nucleotide exchange rates and a fairly low GTP hydrolysis rate. Plays a role in control of the cell cycle, stress response, ribosome biogenesis and in those bacteria that undergo differentiation, in morphogenesis control.</text>
</comment>
<comment type="cofactor">
    <cofactor evidence="1">
        <name>Mg(2+)</name>
        <dbReference type="ChEBI" id="CHEBI:18420"/>
    </cofactor>
</comment>
<comment type="subunit">
    <text evidence="1">Monomer.</text>
</comment>
<comment type="subcellular location">
    <subcellularLocation>
        <location evidence="1">Cytoplasm</location>
    </subcellularLocation>
</comment>
<comment type="similarity">
    <text evidence="1">Belongs to the TRAFAC class OBG-HflX-like GTPase superfamily. OBG GTPase family.</text>
</comment>
<reference key="1">
    <citation type="journal article" date="2010" name="Genome Biol.">
        <title>Structure and dynamics of the pan-genome of Streptococcus pneumoniae and closely related species.</title>
        <authorList>
            <person name="Donati C."/>
            <person name="Hiller N.L."/>
            <person name="Tettelin H."/>
            <person name="Muzzi A."/>
            <person name="Croucher N.J."/>
            <person name="Angiuoli S.V."/>
            <person name="Oggioni M."/>
            <person name="Dunning Hotopp J.C."/>
            <person name="Hu F.Z."/>
            <person name="Riley D.R."/>
            <person name="Covacci A."/>
            <person name="Mitchell T.J."/>
            <person name="Bentley S.D."/>
            <person name="Kilian M."/>
            <person name="Ehrlich G.D."/>
            <person name="Rappuoli R."/>
            <person name="Moxon E.R."/>
            <person name="Masignani V."/>
        </authorList>
    </citation>
    <scope>NUCLEOTIDE SEQUENCE [LARGE SCALE GENOMIC DNA]</scope>
    <source>
        <strain>Hungary19A-6</strain>
    </source>
</reference>